<protein>
    <recommendedName>
        <fullName>Photosystem I iron-sulfur center</fullName>
        <ecNumber>1.97.1.12</ecNumber>
    </recommendedName>
    <alternativeName>
        <fullName>9 kDa polypeptide</fullName>
    </alternativeName>
    <alternativeName>
        <fullName>PSI-C</fullName>
    </alternativeName>
    <alternativeName>
        <fullName>Photosystem I subunit VII</fullName>
    </alternativeName>
    <alternativeName>
        <fullName>PsaC</fullName>
    </alternativeName>
</protein>
<gene>
    <name type="primary">psaC</name>
    <name type="ordered locus">tsl1013</name>
</gene>
<reference key="1">
    <citation type="journal article" date="2002" name="DNA Res.">
        <title>Complete genome structure of the thermophilic cyanobacterium Thermosynechococcus elongatus BP-1.</title>
        <authorList>
            <person name="Nakamura Y."/>
            <person name="Kaneko T."/>
            <person name="Sato S."/>
            <person name="Ikeuchi M."/>
            <person name="Katoh H."/>
            <person name="Sasamoto S."/>
            <person name="Watanabe A."/>
            <person name="Iriguchi M."/>
            <person name="Kawashima K."/>
            <person name="Kimura T."/>
            <person name="Kishida Y."/>
            <person name="Kiyokawa C."/>
            <person name="Kohara M."/>
            <person name="Matsumoto M."/>
            <person name="Matsuno A."/>
            <person name="Nakazaki N."/>
            <person name="Shimpo S."/>
            <person name="Sugimoto M."/>
            <person name="Takeuchi C."/>
            <person name="Yamada M."/>
            <person name="Tabata S."/>
        </authorList>
    </citation>
    <scope>NUCLEOTIDE SEQUENCE [LARGE SCALE GENOMIC DNA]</scope>
    <source>
        <strain>NIES-2133 / IAM M-273 / BP-1</strain>
    </source>
</reference>
<reference key="2">
    <citation type="journal article" date="2001" name="Biochim. Biophys. Acta">
        <title>Structure of photosystem I.</title>
        <authorList>
            <person name="Fromme P."/>
            <person name="Jordan P."/>
            <person name="Krauss N."/>
        </authorList>
    </citation>
    <scope>REVIEW</scope>
</reference>
<reference key="3">
    <citation type="journal article" date="1996" name="Nat. Struct. Biol.">
        <title>Photosystem I at 4-A resolution represents the first structural model of a joint photosynthetic reaction centre and core antenna system.</title>
        <authorList>
            <person name="Krauss N."/>
            <person name="Schubert W.-D."/>
            <person name="Klukas O."/>
            <person name="Fromme P."/>
            <person name="Witt H.T."/>
            <person name="Saenger W."/>
        </authorList>
    </citation>
    <scope>X-RAY CRYSTALLOGRAPHY (4.0 ANGSTROMS)</scope>
    <scope>SUBUNIT</scope>
    <scope>SUBCELLULAR LOCATION</scope>
</reference>
<reference key="4">
    <citation type="journal article" date="1999" name="J. Biol. Chem.">
        <title>Photosystem I, an improved model of the stromal subunits PsaC, PsaD, and PsaE.</title>
        <authorList>
            <person name="Klukas O."/>
            <person name="Schubert W.-D."/>
            <person name="Jordan P."/>
            <person name="Krauss N."/>
            <person name="Fromme P."/>
            <person name="Witt H.T."/>
            <person name="Saenger W."/>
        </authorList>
    </citation>
    <scope>X-RAY CRYSTALLOGRAPHY (4.0 ANGSTROMS)</scope>
    <scope>SUBUNIT</scope>
    <scope>SUBCELLULAR LOCATION</scope>
</reference>
<reference key="5">
    <citation type="journal article" date="2001" name="Nature">
        <title>Three-dimensional structure of cyanobacterial photosystem I at 2.5 A resolution.</title>
        <authorList>
            <person name="Jordan P."/>
            <person name="Fromme P."/>
            <person name="Witt H.T."/>
            <person name="Klukas O."/>
            <person name="Saenger W."/>
            <person name="Krauss N."/>
        </authorList>
    </citation>
    <scope>X-RAY CRYSTALLOGRAPHY (2.5 ANGSTROMS) OF 2-81 IN COMPLEX WITH 4FE-4S CLUSTER</scope>
    <scope>COFACTOR</scope>
    <scope>SUBUNIT</scope>
    <scope>SUBCELLULAR LOCATION</scope>
</reference>
<organism>
    <name type="scientific">Thermosynechococcus vestitus (strain NIES-2133 / IAM M-273 / BP-1)</name>
    <dbReference type="NCBI Taxonomy" id="197221"/>
    <lineage>
        <taxon>Bacteria</taxon>
        <taxon>Bacillati</taxon>
        <taxon>Cyanobacteriota</taxon>
        <taxon>Cyanophyceae</taxon>
        <taxon>Acaryochloridales</taxon>
        <taxon>Thermosynechococcaceae</taxon>
        <taxon>Thermosynechococcus</taxon>
    </lineage>
</organism>
<sequence length="81" mass="8800">MAHTVKIYDTCIGCTQCVRACPTDVLEMVPWDGCKAGQIASSPRTEDCVGCKRCETACPTDFLSIRVYLGAETTRSMGLAY</sequence>
<evidence type="ECO:0000250" key="1"/>
<evidence type="ECO:0000269" key="2">
    <source>
    </source>
</evidence>
<evidence type="ECO:0000269" key="3">
    <source>
    </source>
</evidence>
<evidence type="ECO:0000269" key="4">
    <source>
    </source>
</evidence>
<evidence type="ECO:0000305" key="5">
    <source>
    </source>
</evidence>
<evidence type="ECO:0007829" key="6">
    <source>
        <dbReference type="PDB" id="1JB0"/>
    </source>
</evidence>
<dbReference type="EC" id="1.97.1.12"/>
<dbReference type="EMBL" id="BA000039">
    <property type="protein sequence ID" value="BAC08565.1"/>
    <property type="molecule type" value="Genomic_DNA"/>
</dbReference>
<dbReference type="RefSeq" id="NP_681803.1">
    <property type="nucleotide sequence ID" value="NC_004113.1"/>
</dbReference>
<dbReference type="RefSeq" id="WP_011056855.1">
    <property type="nucleotide sequence ID" value="NC_004113.1"/>
</dbReference>
<dbReference type="PDB" id="1C51">
    <property type="method" value="X-ray"/>
    <property type="resolution" value="4.00 A"/>
</dbReference>
<dbReference type="PDB" id="1JB0">
    <property type="method" value="X-ray"/>
    <property type="resolution" value="2.50 A"/>
    <property type="chains" value="C=2-81"/>
</dbReference>
<dbReference type="PDB" id="2PPS">
    <property type="method" value="X-ray"/>
    <property type="resolution" value="4.00 A"/>
</dbReference>
<dbReference type="PDB" id="3PCQ">
    <property type="method" value="X-ray"/>
    <property type="resolution" value="8.98 A"/>
    <property type="chains" value="C=2-81"/>
</dbReference>
<dbReference type="PDB" id="4FE1">
    <property type="method" value="X-ray"/>
    <property type="resolution" value="4.92 A"/>
    <property type="chains" value="C=2-81"/>
</dbReference>
<dbReference type="PDB" id="5ZF0">
    <property type="method" value="X-ray"/>
    <property type="resolution" value="4.20 A"/>
    <property type="chains" value="C1/C2/C3/C4/C5/C6=2-81"/>
</dbReference>
<dbReference type="PDB" id="6LU1">
    <property type="method" value="EM"/>
    <property type="resolution" value="3.20 A"/>
    <property type="chains" value="C=1-81"/>
</dbReference>
<dbReference type="PDB" id="6PFY">
    <property type="method" value="X-ray"/>
    <property type="resolution" value="2.90 A"/>
    <property type="chains" value="C/N/a=1-81"/>
</dbReference>
<dbReference type="PDB" id="6PGK">
    <property type="method" value="X-ray"/>
    <property type="resolution" value="2.90 A"/>
    <property type="chains" value="C/N/a=1-81"/>
</dbReference>
<dbReference type="PDB" id="6TRA">
    <property type="method" value="EM"/>
    <property type="resolution" value="2.85 A"/>
    <property type="chains" value="C=1-81"/>
</dbReference>
<dbReference type="PDB" id="6TRC">
    <property type="method" value="EM"/>
    <property type="resolution" value="2.98 A"/>
    <property type="chains" value="3/C/c=1-81"/>
</dbReference>
<dbReference type="PDB" id="6TRD">
    <property type="method" value="EM"/>
    <property type="resolution" value="3.16 A"/>
    <property type="chains" value="3/C/c=1-81"/>
</dbReference>
<dbReference type="PDB" id="7BW2">
    <property type="method" value="X-ray"/>
    <property type="resolution" value="6.50 A"/>
    <property type="chains" value="C=1-81"/>
</dbReference>
<dbReference type="PDB" id="7FIX">
    <property type="method" value="EM"/>
    <property type="resolution" value="1.97 A"/>
    <property type="chains" value="C1/C2/C3=1-81"/>
</dbReference>
<dbReference type="PDB" id="7M75">
    <property type="method" value="X-ray"/>
    <property type="resolution" value="2.75 A"/>
    <property type="chains" value="C=2-81"/>
</dbReference>
<dbReference type="PDB" id="7M76">
    <property type="method" value="X-ray"/>
    <property type="resolution" value="3.00 A"/>
    <property type="chains" value="C=2-81"/>
</dbReference>
<dbReference type="PDB" id="7M78">
    <property type="method" value="X-ray"/>
    <property type="resolution" value="3.00 A"/>
    <property type="chains" value="C=2-81"/>
</dbReference>
<dbReference type="PDBsum" id="1C51"/>
<dbReference type="PDBsum" id="1JB0"/>
<dbReference type="PDBsum" id="2PPS"/>
<dbReference type="PDBsum" id="3PCQ"/>
<dbReference type="PDBsum" id="4FE1"/>
<dbReference type="PDBsum" id="5ZF0"/>
<dbReference type="PDBsum" id="6LU1"/>
<dbReference type="PDBsum" id="6PFY"/>
<dbReference type="PDBsum" id="6PGK"/>
<dbReference type="PDBsum" id="6TRA"/>
<dbReference type="PDBsum" id="6TRC"/>
<dbReference type="PDBsum" id="6TRD"/>
<dbReference type="PDBsum" id="7BW2"/>
<dbReference type="PDBsum" id="7FIX"/>
<dbReference type="PDBsum" id="7M75"/>
<dbReference type="PDBsum" id="7M76"/>
<dbReference type="PDBsum" id="7M78"/>
<dbReference type="EMDB" id="EMD-0977"/>
<dbReference type="EMDB" id="EMD-10557"/>
<dbReference type="EMDB" id="EMD-10558"/>
<dbReference type="EMDB" id="EMD-10559"/>
<dbReference type="EMDB" id="EMD-31605"/>
<dbReference type="SMR" id="P0A415"/>
<dbReference type="IntAct" id="P0A415">
    <property type="interactions" value="1"/>
</dbReference>
<dbReference type="STRING" id="197221.gene:10747605"/>
<dbReference type="EnsemblBacteria" id="BAC08565">
    <property type="protein sequence ID" value="BAC08565"/>
    <property type="gene ID" value="BAC08565"/>
</dbReference>
<dbReference type="KEGG" id="tel:tsl1013"/>
<dbReference type="PATRIC" id="fig|197221.4.peg.1063"/>
<dbReference type="eggNOG" id="COG1143">
    <property type="taxonomic scope" value="Bacteria"/>
</dbReference>
<dbReference type="BRENDA" id="1.97.1.12">
    <property type="organism ID" value="7763"/>
</dbReference>
<dbReference type="EvolutionaryTrace" id="P0A415"/>
<dbReference type="Proteomes" id="UP000000440">
    <property type="component" value="Chromosome"/>
</dbReference>
<dbReference type="GO" id="GO:0009522">
    <property type="term" value="C:photosystem I"/>
    <property type="evidence" value="ECO:0007669"/>
    <property type="project" value="UniProtKB-KW"/>
</dbReference>
<dbReference type="GO" id="GO:0031676">
    <property type="term" value="C:plasma membrane-derived thylakoid membrane"/>
    <property type="evidence" value="ECO:0007669"/>
    <property type="project" value="UniProtKB-SubCell"/>
</dbReference>
<dbReference type="GO" id="GO:0051539">
    <property type="term" value="F:4 iron, 4 sulfur cluster binding"/>
    <property type="evidence" value="ECO:0007669"/>
    <property type="project" value="UniProtKB-KW"/>
</dbReference>
<dbReference type="GO" id="GO:0009055">
    <property type="term" value="F:electron transfer activity"/>
    <property type="evidence" value="ECO:0007669"/>
    <property type="project" value="UniProtKB-UniRule"/>
</dbReference>
<dbReference type="GO" id="GO:0046872">
    <property type="term" value="F:metal ion binding"/>
    <property type="evidence" value="ECO:0007669"/>
    <property type="project" value="UniProtKB-KW"/>
</dbReference>
<dbReference type="GO" id="GO:0016491">
    <property type="term" value="F:oxidoreductase activity"/>
    <property type="evidence" value="ECO:0007669"/>
    <property type="project" value="UniProtKB-KW"/>
</dbReference>
<dbReference type="GO" id="GO:0009773">
    <property type="term" value="P:photosynthetic electron transport in photosystem I"/>
    <property type="evidence" value="ECO:0007669"/>
    <property type="project" value="InterPro"/>
</dbReference>
<dbReference type="FunFam" id="3.30.70.20:FF:000001">
    <property type="entry name" value="Photosystem I iron-sulfur center"/>
    <property type="match status" value="1"/>
</dbReference>
<dbReference type="Gene3D" id="3.30.70.20">
    <property type="match status" value="1"/>
</dbReference>
<dbReference type="HAMAP" id="MF_01303">
    <property type="entry name" value="PSI_PsaC"/>
    <property type="match status" value="1"/>
</dbReference>
<dbReference type="InterPro" id="IPR017896">
    <property type="entry name" value="4Fe4S_Fe-S-bd"/>
</dbReference>
<dbReference type="InterPro" id="IPR017900">
    <property type="entry name" value="4Fe4S_Fe_S_CS"/>
</dbReference>
<dbReference type="InterPro" id="IPR050157">
    <property type="entry name" value="PSI_iron-sulfur_center"/>
</dbReference>
<dbReference type="InterPro" id="IPR017491">
    <property type="entry name" value="PSI_PsaC"/>
</dbReference>
<dbReference type="NCBIfam" id="TIGR03048">
    <property type="entry name" value="PS_I_psaC"/>
    <property type="match status" value="1"/>
</dbReference>
<dbReference type="PANTHER" id="PTHR24960:SF79">
    <property type="entry name" value="PHOTOSYSTEM I IRON-SULFUR CENTER"/>
    <property type="match status" value="1"/>
</dbReference>
<dbReference type="PANTHER" id="PTHR24960">
    <property type="entry name" value="PHOTOSYSTEM I IRON-SULFUR CENTER-RELATED"/>
    <property type="match status" value="1"/>
</dbReference>
<dbReference type="Pfam" id="PF12838">
    <property type="entry name" value="Fer4_7"/>
    <property type="match status" value="1"/>
</dbReference>
<dbReference type="SUPFAM" id="SSF54862">
    <property type="entry name" value="4Fe-4S ferredoxins"/>
    <property type="match status" value="1"/>
</dbReference>
<dbReference type="PROSITE" id="PS00198">
    <property type="entry name" value="4FE4S_FER_1"/>
    <property type="match status" value="2"/>
</dbReference>
<dbReference type="PROSITE" id="PS51379">
    <property type="entry name" value="4FE4S_FER_2"/>
    <property type="match status" value="2"/>
</dbReference>
<name>PSAC_THEVB</name>
<keyword id="KW-0002">3D-structure</keyword>
<keyword id="KW-0004">4Fe-4S</keyword>
<keyword id="KW-0249">Electron transport</keyword>
<keyword id="KW-0408">Iron</keyword>
<keyword id="KW-0411">Iron-sulfur</keyword>
<keyword id="KW-0472">Membrane</keyword>
<keyword id="KW-0479">Metal-binding</keyword>
<keyword id="KW-0560">Oxidoreductase</keyword>
<keyword id="KW-0602">Photosynthesis</keyword>
<keyword id="KW-0603">Photosystem I</keyword>
<keyword id="KW-1185">Reference proteome</keyword>
<keyword id="KW-0677">Repeat</keyword>
<keyword id="KW-0793">Thylakoid</keyword>
<keyword id="KW-0813">Transport</keyword>
<comment type="function">
    <text>Apoprotein for the two 4Fe-4S centers FA and FB of photosystem I (PSI); essential for photochemical activity. FB is the terminal electron acceptor of PSI, donating electrons to ferredoxin. The C-terminus interacts with PsaA/B/D and helps assemble the protein into the PSI complex. Required for binding of PsaD and PsaE to PSI. PSI is a plastocyanin/cytochrome c6-ferredoxin oxidoreductase, converting photonic excitation into a charge separation, which transfers an electron from the donor P700 chlorophyll pair to the spectroscopically characterized acceptors A0, A1, FX, FA and FB in turn.</text>
</comment>
<comment type="catalytic activity">
    <reaction>
        <text>reduced [plastocyanin] + hnu + oxidized [2Fe-2S]-[ferredoxin] = oxidized [plastocyanin] + reduced [2Fe-2S]-[ferredoxin]</text>
        <dbReference type="Rhea" id="RHEA:30407"/>
        <dbReference type="Rhea" id="RHEA-COMP:10000"/>
        <dbReference type="Rhea" id="RHEA-COMP:10001"/>
        <dbReference type="Rhea" id="RHEA-COMP:10039"/>
        <dbReference type="Rhea" id="RHEA-COMP:10040"/>
        <dbReference type="ChEBI" id="CHEBI:29036"/>
        <dbReference type="ChEBI" id="CHEBI:30212"/>
        <dbReference type="ChEBI" id="CHEBI:33737"/>
        <dbReference type="ChEBI" id="CHEBI:33738"/>
        <dbReference type="ChEBI" id="CHEBI:49552"/>
        <dbReference type="EC" id="1.97.1.12"/>
    </reaction>
</comment>
<comment type="cofactor">
    <cofactor evidence="3">
        <name>[4Fe-4S] cluster</name>
        <dbReference type="ChEBI" id="CHEBI:49883"/>
    </cofactor>
    <text evidence="5">Binds 2 [4Fe-4S] clusters. Cluster 2 is most probably the spectroscopically characterized electron acceptor FA and cluster 1 is most probably FB.</text>
</comment>
<comment type="subunit">
    <text evidence="2 3 4">The cyanobacterial PSI reaction center is composed of one copy each of PsaA,B,C,D,E,F,I,J,K,L,M and X, and forms trimeric complexes.</text>
</comment>
<comment type="subcellular location">
    <subcellularLocation>
        <location evidence="2 3 4">Cellular thylakoid membrane</location>
        <topology evidence="3">Peripheral membrane protein</topology>
        <orientation evidence="3">Cytoplasmic side</orientation>
    </subcellularLocation>
</comment>
<proteinExistence type="evidence at protein level"/>
<accession>P0A415</accession>
<accession>P18083</accession>
<accession>P20451</accession>
<feature type="initiator methionine" description="Removed" evidence="1">
    <location>
        <position position="1"/>
    </location>
</feature>
<feature type="chain" id="PRO_0000062018" description="Photosystem I iron-sulfur center">
    <location>
        <begin position="2"/>
        <end position="81"/>
    </location>
</feature>
<feature type="domain" description="4Fe-4S ferredoxin-type 1">
    <location>
        <begin position="2"/>
        <end position="31"/>
    </location>
</feature>
<feature type="domain" description="4Fe-4S ferredoxin-type 2">
    <location>
        <begin position="37"/>
        <end position="68"/>
    </location>
</feature>
<feature type="binding site" evidence="3">
    <location>
        <position position="11"/>
    </location>
    <ligand>
        <name>[4Fe-4S] cluster</name>
        <dbReference type="ChEBI" id="CHEBI:49883"/>
        <label>1</label>
    </ligand>
</feature>
<feature type="binding site" evidence="3">
    <location>
        <position position="14"/>
    </location>
    <ligand>
        <name>[4Fe-4S] cluster</name>
        <dbReference type="ChEBI" id="CHEBI:49883"/>
        <label>1</label>
    </ligand>
</feature>
<feature type="binding site" evidence="3">
    <location>
        <position position="17"/>
    </location>
    <ligand>
        <name>[4Fe-4S] cluster</name>
        <dbReference type="ChEBI" id="CHEBI:49883"/>
        <label>1</label>
    </ligand>
</feature>
<feature type="binding site" evidence="3">
    <location>
        <position position="21"/>
    </location>
    <ligand>
        <name>[4Fe-4S] cluster</name>
        <dbReference type="ChEBI" id="CHEBI:49883"/>
        <label>2</label>
    </ligand>
</feature>
<feature type="binding site" evidence="3">
    <location>
        <position position="48"/>
    </location>
    <ligand>
        <name>[4Fe-4S] cluster</name>
        <dbReference type="ChEBI" id="CHEBI:49883"/>
        <label>2</label>
    </ligand>
</feature>
<feature type="binding site" evidence="3">
    <location>
        <position position="51"/>
    </location>
    <ligand>
        <name>[4Fe-4S] cluster</name>
        <dbReference type="ChEBI" id="CHEBI:49883"/>
        <label>2</label>
    </ligand>
</feature>
<feature type="binding site" evidence="3">
    <location>
        <position position="54"/>
    </location>
    <ligand>
        <name>[4Fe-4S] cluster</name>
        <dbReference type="ChEBI" id="CHEBI:49883"/>
        <label>2</label>
    </ligand>
</feature>
<feature type="binding site" evidence="3">
    <location>
        <position position="58"/>
    </location>
    <ligand>
        <name>[4Fe-4S] cluster</name>
        <dbReference type="ChEBI" id="CHEBI:49883"/>
        <label>1</label>
    </ligand>
</feature>
<feature type="strand" evidence="6">
    <location>
        <begin position="4"/>
        <end position="8"/>
    </location>
</feature>
<feature type="helix" evidence="6">
    <location>
        <begin position="16"/>
        <end position="20"/>
    </location>
</feature>
<feature type="strand" evidence="6">
    <location>
        <begin position="27"/>
        <end position="30"/>
    </location>
</feature>
<feature type="strand" evidence="6">
    <location>
        <begin position="32"/>
        <end position="34"/>
    </location>
</feature>
<feature type="strand" evidence="6">
    <location>
        <begin position="37"/>
        <end position="41"/>
    </location>
</feature>
<feature type="helix" evidence="6">
    <location>
        <begin position="45"/>
        <end position="47"/>
    </location>
</feature>
<feature type="helix" evidence="6">
    <location>
        <begin position="53"/>
        <end position="57"/>
    </location>
</feature>
<feature type="strand" evidence="6">
    <location>
        <begin position="60"/>
        <end position="62"/>
    </location>
</feature>
<feature type="strand" evidence="6">
    <location>
        <begin position="64"/>
        <end position="68"/>
    </location>
</feature>
<feature type="turn" evidence="6">
    <location>
        <begin position="74"/>
        <end position="78"/>
    </location>
</feature>